<name>RL24_CHLFF</name>
<evidence type="ECO:0000255" key="1">
    <source>
        <dbReference type="HAMAP-Rule" id="MF_01326"/>
    </source>
</evidence>
<evidence type="ECO:0000305" key="2"/>
<protein>
    <recommendedName>
        <fullName evidence="1">Large ribosomal subunit protein uL24</fullName>
    </recommendedName>
    <alternativeName>
        <fullName evidence="2">50S ribosomal protein L24</fullName>
    </alternativeName>
</protein>
<sequence length="113" mass="12677">MKRRSVCVGDTVYVLAGNDKGKQGKVLSCLREKNKVVVEGINVRTKNIKRSQENPKGKRISIEAPIHVSNVRLSIEGAPAKISVKVTEKGRELWNKFPDGTSKLYRFVKERKG</sequence>
<accession>Q252W4</accession>
<feature type="chain" id="PRO_0000241585" description="Large ribosomal subunit protein uL24">
    <location>
        <begin position="1"/>
        <end position="113"/>
    </location>
</feature>
<reference key="1">
    <citation type="journal article" date="2006" name="DNA Res.">
        <title>Genome sequence of the cat pathogen, Chlamydophila felis.</title>
        <authorList>
            <person name="Azuma Y."/>
            <person name="Hirakawa H."/>
            <person name="Yamashita A."/>
            <person name="Cai Y."/>
            <person name="Rahman M.A."/>
            <person name="Suzuki H."/>
            <person name="Mitaku S."/>
            <person name="Toh H."/>
            <person name="Goto S."/>
            <person name="Murakami T."/>
            <person name="Sugi K."/>
            <person name="Hayashi H."/>
            <person name="Fukushi H."/>
            <person name="Hattori M."/>
            <person name="Kuhara S."/>
            <person name="Shirai M."/>
        </authorList>
    </citation>
    <scope>NUCLEOTIDE SEQUENCE [LARGE SCALE GENOMIC DNA]</scope>
    <source>
        <strain>Fe/C-56</strain>
    </source>
</reference>
<proteinExistence type="inferred from homology"/>
<keyword id="KW-0687">Ribonucleoprotein</keyword>
<keyword id="KW-0689">Ribosomal protein</keyword>
<keyword id="KW-0694">RNA-binding</keyword>
<keyword id="KW-0699">rRNA-binding</keyword>
<organism>
    <name type="scientific">Chlamydia felis (strain Fe/C-56)</name>
    <name type="common">Chlamydophila felis</name>
    <dbReference type="NCBI Taxonomy" id="264202"/>
    <lineage>
        <taxon>Bacteria</taxon>
        <taxon>Pseudomonadati</taxon>
        <taxon>Chlamydiota</taxon>
        <taxon>Chlamydiia</taxon>
        <taxon>Chlamydiales</taxon>
        <taxon>Chlamydiaceae</taxon>
        <taxon>Chlamydia/Chlamydophila group</taxon>
        <taxon>Chlamydia</taxon>
    </lineage>
</organism>
<dbReference type="EMBL" id="AP006861">
    <property type="protein sequence ID" value="BAE81674.1"/>
    <property type="molecule type" value="Genomic_DNA"/>
</dbReference>
<dbReference type="RefSeq" id="WP_011458448.1">
    <property type="nucleotide sequence ID" value="NC_007899.1"/>
</dbReference>
<dbReference type="SMR" id="Q252W4"/>
<dbReference type="STRING" id="264202.CF0902"/>
<dbReference type="KEGG" id="cfe:CF0902"/>
<dbReference type="eggNOG" id="COG0198">
    <property type="taxonomic scope" value="Bacteria"/>
</dbReference>
<dbReference type="HOGENOM" id="CLU_093315_2_0_0"/>
<dbReference type="OrthoDB" id="9807419at2"/>
<dbReference type="Proteomes" id="UP000001260">
    <property type="component" value="Chromosome"/>
</dbReference>
<dbReference type="GO" id="GO:1990904">
    <property type="term" value="C:ribonucleoprotein complex"/>
    <property type="evidence" value="ECO:0007669"/>
    <property type="project" value="UniProtKB-KW"/>
</dbReference>
<dbReference type="GO" id="GO:0005840">
    <property type="term" value="C:ribosome"/>
    <property type="evidence" value="ECO:0007669"/>
    <property type="project" value="UniProtKB-KW"/>
</dbReference>
<dbReference type="GO" id="GO:0019843">
    <property type="term" value="F:rRNA binding"/>
    <property type="evidence" value="ECO:0007669"/>
    <property type="project" value="UniProtKB-UniRule"/>
</dbReference>
<dbReference type="GO" id="GO:0003735">
    <property type="term" value="F:structural constituent of ribosome"/>
    <property type="evidence" value="ECO:0007669"/>
    <property type="project" value="InterPro"/>
</dbReference>
<dbReference type="GO" id="GO:0006412">
    <property type="term" value="P:translation"/>
    <property type="evidence" value="ECO:0007669"/>
    <property type="project" value="UniProtKB-UniRule"/>
</dbReference>
<dbReference type="CDD" id="cd06089">
    <property type="entry name" value="KOW_RPL26"/>
    <property type="match status" value="1"/>
</dbReference>
<dbReference type="Gene3D" id="2.30.30.30">
    <property type="match status" value="1"/>
</dbReference>
<dbReference type="HAMAP" id="MF_01326_B">
    <property type="entry name" value="Ribosomal_uL24_B"/>
    <property type="match status" value="1"/>
</dbReference>
<dbReference type="InterPro" id="IPR005824">
    <property type="entry name" value="KOW"/>
</dbReference>
<dbReference type="InterPro" id="IPR014722">
    <property type="entry name" value="Rib_uL2_dom2"/>
</dbReference>
<dbReference type="InterPro" id="IPR003256">
    <property type="entry name" value="Ribosomal_uL24"/>
</dbReference>
<dbReference type="InterPro" id="IPR005825">
    <property type="entry name" value="Ribosomal_uL24_CS"/>
</dbReference>
<dbReference type="InterPro" id="IPR041988">
    <property type="entry name" value="Ribosomal_uL24_KOW"/>
</dbReference>
<dbReference type="InterPro" id="IPR008991">
    <property type="entry name" value="Translation_prot_SH3-like_sf"/>
</dbReference>
<dbReference type="NCBIfam" id="TIGR01079">
    <property type="entry name" value="rplX_bact"/>
    <property type="match status" value="1"/>
</dbReference>
<dbReference type="PANTHER" id="PTHR12903">
    <property type="entry name" value="MITOCHONDRIAL RIBOSOMAL PROTEIN L24"/>
    <property type="match status" value="1"/>
</dbReference>
<dbReference type="Pfam" id="PF00467">
    <property type="entry name" value="KOW"/>
    <property type="match status" value="1"/>
</dbReference>
<dbReference type="Pfam" id="PF17136">
    <property type="entry name" value="ribosomal_L24"/>
    <property type="match status" value="1"/>
</dbReference>
<dbReference type="SMART" id="SM00739">
    <property type="entry name" value="KOW"/>
    <property type="match status" value="1"/>
</dbReference>
<dbReference type="SUPFAM" id="SSF50104">
    <property type="entry name" value="Translation proteins SH3-like domain"/>
    <property type="match status" value="1"/>
</dbReference>
<dbReference type="PROSITE" id="PS01108">
    <property type="entry name" value="RIBOSOMAL_L24"/>
    <property type="match status" value="1"/>
</dbReference>
<gene>
    <name evidence="1" type="primary">rplX</name>
    <name type="ordered locus">CF0902</name>
</gene>
<comment type="function">
    <text evidence="1">One of two assembly initiator proteins, it binds directly to the 5'-end of the 23S rRNA, where it nucleates assembly of the 50S subunit.</text>
</comment>
<comment type="function">
    <text evidence="1">One of the proteins that surrounds the polypeptide exit tunnel on the outside of the subunit.</text>
</comment>
<comment type="subunit">
    <text evidence="1">Part of the 50S ribosomal subunit.</text>
</comment>
<comment type="similarity">
    <text evidence="1">Belongs to the universal ribosomal protein uL24 family.</text>
</comment>